<feature type="chain" id="PRO_0000152190" description="NH(3)-dependent NAD(+) synthetase">
    <location>
        <begin position="1"/>
        <end position="275"/>
    </location>
</feature>
<feature type="binding site" evidence="1">
    <location>
        <begin position="46"/>
        <end position="53"/>
    </location>
    <ligand>
        <name>ATP</name>
        <dbReference type="ChEBI" id="CHEBI:30616"/>
    </ligand>
</feature>
<feature type="binding site" evidence="1">
    <location>
        <position position="52"/>
    </location>
    <ligand>
        <name>Mg(2+)</name>
        <dbReference type="ChEBI" id="CHEBI:18420"/>
    </ligand>
</feature>
<feature type="binding site" evidence="1">
    <location>
        <position position="140"/>
    </location>
    <ligand>
        <name>deamido-NAD(+)</name>
        <dbReference type="ChEBI" id="CHEBI:58437"/>
    </ligand>
</feature>
<feature type="binding site" evidence="1">
    <location>
        <position position="160"/>
    </location>
    <ligand>
        <name>ATP</name>
        <dbReference type="ChEBI" id="CHEBI:30616"/>
    </ligand>
</feature>
<feature type="binding site" evidence="1">
    <location>
        <position position="165"/>
    </location>
    <ligand>
        <name>Mg(2+)</name>
        <dbReference type="ChEBI" id="CHEBI:18420"/>
    </ligand>
</feature>
<feature type="binding site" evidence="1">
    <location>
        <position position="173"/>
    </location>
    <ligand>
        <name>deamido-NAD(+)</name>
        <dbReference type="ChEBI" id="CHEBI:58437"/>
    </ligand>
</feature>
<feature type="binding site" evidence="1">
    <location>
        <position position="180"/>
    </location>
    <ligand>
        <name>deamido-NAD(+)</name>
        <dbReference type="ChEBI" id="CHEBI:58437"/>
    </ligand>
</feature>
<feature type="binding site" evidence="1">
    <location>
        <position position="189"/>
    </location>
    <ligand>
        <name>ATP</name>
        <dbReference type="ChEBI" id="CHEBI:30616"/>
    </ligand>
</feature>
<feature type="binding site" evidence="1">
    <location>
        <position position="211"/>
    </location>
    <ligand>
        <name>ATP</name>
        <dbReference type="ChEBI" id="CHEBI:30616"/>
    </ligand>
</feature>
<feature type="binding site" evidence="1">
    <location>
        <begin position="260"/>
        <end position="261"/>
    </location>
    <ligand>
        <name>deamido-NAD(+)</name>
        <dbReference type="ChEBI" id="CHEBI:58437"/>
    </ligand>
</feature>
<comment type="function">
    <text evidence="1">Catalyzes the ATP-dependent amidation of deamido-NAD to form NAD. Uses ammonia as a nitrogen source.</text>
</comment>
<comment type="catalytic activity">
    <reaction evidence="1">
        <text>deamido-NAD(+) + NH4(+) + ATP = AMP + diphosphate + NAD(+) + H(+)</text>
        <dbReference type="Rhea" id="RHEA:21188"/>
        <dbReference type="ChEBI" id="CHEBI:15378"/>
        <dbReference type="ChEBI" id="CHEBI:28938"/>
        <dbReference type="ChEBI" id="CHEBI:30616"/>
        <dbReference type="ChEBI" id="CHEBI:33019"/>
        <dbReference type="ChEBI" id="CHEBI:57540"/>
        <dbReference type="ChEBI" id="CHEBI:58437"/>
        <dbReference type="ChEBI" id="CHEBI:456215"/>
        <dbReference type="EC" id="6.3.1.5"/>
    </reaction>
</comment>
<comment type="pathway">
    <text evidence="1">Cofactor biosynthesis; NAD(+) biosynthesis; NAD(+) from deamido-NAD(+) (ammonia route): step 1/1.</text>
</comment>
<comment type="subunit">
    <text evidence="1">Homodimer.</text>
</comment>
<comment type="similarity">
    <text evidence="1">Belongs to the NAD synthetase family.</text>
</comment>
<proteinExistence type="inferred from homology"/>
<dbReference type="EC" id="6.3.1.5" evidence="1"/>
<dbReference type="EMBL" id="AL513382">
    <property type="protein sequence ID" value="CAD02044.1"/>
    <property type="molecule type" value="Genomic_DNA"/>
</dbReference>
<dbReference type="EMBL" id="AE014613">
    <property type="protein sequence ID" value="AAO68845.1"/>
    <property type="molecule type" value="Genomic_DNA"/>
</dbReference>
<dbReference type="RefSeq" id="NP_456202.1">
    <property type="nucleotide sequence ID" value="NC_003198.1"/>
</dbReference>
<dbReference type="RefSeq" id="WP_000174989.1">
    <property type="nucleotide sequence ID" value="NZ_WSUR01000034.1"/>
</dbReference>
<dbReference type="SMR" id="Q8Z6G6"/>
<dbReference type="STRING" id="220341.gene:17585736"/>
<dbReference type="KEGG" id="stt:t1189"/>
<dbReference type="KEGG" id="sty:STY1803"/>
<dbReference type="PATRIC" id="fig|220341.7.peg.1816"/>
<dbReference type="eggNOG" id="COG0171">
    <property type="taxonomic scope" value="Bacteria"/>
</dbReference>
<dbReference type="HOGENOM" id="CLU_059327_3_0_6"/>
<dbReference type="OMA" id="FCARLRM"/>
<dbReference type="OrthoDB" id="3266517at2"/>
<dbReference type="UniPathway" id="UPA00253">
    <property type="reaction ID" value="UER00333"/>
</dbReference>
<dbReference type="Proteomes" id="UP000000541">
    <property type="component" value="Chromosome"/>
</dbReference>
<dbReference type="Proteomes" id="UP000002670">
    <property type="component" value="Chromosome"/>
</dbReference>
<dbReference type="GO" id="GO:0005737">
    <property type="term" value="C:cytoplasm"/>
    <property type="evidence" value="ECO:0007669"/>
    <property type="project" value="InterPro"/>
</dbReference>
<dbReference type="GO" id="GO:0005524">
    <property type="term" value="F:ATP binding"/>
    <property type="evidence" value="ECO:0007669"/>
    <property type="project" value="UniProtKB-UniRule"/>
</dbReference>
<dbReference type="GO" id="GO:0004359">
    <property type="term" value="F:glutaminase activity"/>
    <property type="evidence" value="ECO:0007669"/>
    <property type="project" value="InterPro"/>
</dbReference>
<dbReference type="GO" id="GO:0046872">
    <property type="term" value="F:metal ion binding"/>
    <property type="evidence" value="ECO:0007669"/>
    <property type="project" value="UniProtKB-KW"/>
</dbReference>
<dbReference type="GO" id="GO:0003952">
    <property type="term" value="F:NAD+ synthase (glutamine-hydrolyzing) activity"/>
    <property type="evidence" value="ECO:0007669"/>
    <property type="project" value="InterPro"/>
</dbReference>
<dbReference type="GO" id="GO:0008795">
    <property type="term" value="F:NAD+ synthase activity"/>
    <property type="evidence" value="ECO:0007669"/>
    <property type="project" value="UniProtKB-UniRule"/>
</dbReference>
<dbReference type="GO" id="GO:0009435">
    <property type="term" value="P:NAD biosynthetic process"/>
    <property type="evidence" value="ECO:0007669"/>
    <property type="project" value="UniProtKB-UniRule"/>
</dbReference>
<dbReference type="CDD" id="cd00553">
    <property type="entry name" value="NAD_synthase"/>
    <property type="match status" value="1"/>
</dbReference>
<dbReference type="FunFam" id="3.40.50.620:FF:000015">
    <property type="entry name" value="NH(3)-dependent NAD(+) synthetase"/>
    <property type="match status" value="1"/>
</dbReference>
<dbReference type="Gene3D" id="3.40.50.620">
    <property type="entry name" value="HUPs"/>
    <property type="match status" value="1"/>
</dbReference>
<dbReference type="HAMAP" id="MF_00193">
    <property type="entry name" value="NadE_ammonia_dep"/>
    <property type="match status" value="1"/>
</dbReference>
<dbReference type="InterPro" id="IPR022310">
    <property type="entry name" value="NAD/GMP_synthase"/>
</dbReference>
<dbReference type="InterPro" id="IPR003694">
    <property type="entry name" value="NAD_synthase"/>
</dbReference>
<dbReference type="InterPro" id="IPR022926">
    <property type="entry name" value="NH(3)-dep_NAD(+)_synth"/>
</dbReference>
<dbReference type="InterPro" id="IPR014729">
    <property type="entry name" value="Rossmann-like_a/b/a_fold"/>
</dbReference>
<dbReference type="NCBIfam" id="TIGR00552">
    <property type="entry name" value="nadE"/>
    <property type="match status" value="1"/>
</dbReference>
<dbReference type="NCBIfam" id="NF001979">
    <property type="entry name" value="PRK00768.1"/>
    <property type="match status" value="1"/>
</dbReference>
<dbReference type="PANTHER" id="PTHR23090">
    <property type="entry name" value="NH 3 /GLUTAMINE-DEPENDENT NAD + SYNTHETASE"/>
    <property type="match status" value="1"/>
</dbReference>
<dbReference type="PANTHER" id="PTHR23090:SF7">
    <property type="entry name" value="NH(3)-DEPENDENT NAD(+) SYNTHETASE"/>
    <property type="match status" value="1"/>
</dbReference>
<dbReference type="Pfam" id="PF02540">
    <property type="entry name" value="NAD_synthase"/>
    <property type="match status" value="1"/>
</dbReference>
<dbReference type="SUPFAM" id="SSF52402">
    <property type="entry name" value="Adenine nucleotide alpha hydrolases-like"/>
    <property type="match status" value="1"/>
</dbReference>
<name>NADE_SALTI</name>
<evidence type="ECO:0000255" key="1">
    <source>
        <dbReference type="HAMAP-Rule" id="MF_00193"/>
    </source>
</evidence>
<accession>Q8Z6G6</accession>
<organism>
    <name type="scientific">Salmonella typhi</name>
    <dbReference type="NCBI Taxonomy" id="90370"/>
    <lineage>
        <taxon>Bacteria</taxon>
        <taxon>Pseudomonadati</taxon>
        <taxon>Pseudomonadota</taxon>
        <taxon>Gammaproteobacteria</taxon>
        <taxon>Enterobacterales</taxon>
        <taxon>Enterobacteriaceae</taxon>
        <taxon>Salmonella</taxon>
    </lineage>
</organism>
<sequence length="275" mass="30476">MTLQQEIIQALGAKPHINPEEEIRRSVDFLKAYLKTYPFLKSLVLGISGGQDSTLAGKLSQMAITELREETGDNALQFIAVRLPYGVQADEQDCQDAIAFIQPDRVLTVNIKGAVLASEQALREAGIELSDFVRGNEKARERMKAQYSIAGMTHGVVVGTDHAAEAITGFFTKYGDGGTDINPLHRLNKRQGKQLLAALGCPEHLYKKVPTADLEDDRPSLPDEAALGVTYDNIDDYLEGKTLDSAIAKTIEGWYVKTEHKRRLPITVFDDFWKK</sequence>
<reference key="1">
    <citation type="journal article" date="2001" name="Nature">
        <title>Complete genome sequence of a multiple drug resistant Salmonella enterica serovar Typhi CT18.</title>
        <authorList>
            <person name="Parkhill J."/>
            <person name="Dougan G."/>
            <person name="James K.D."/>
            <person name="Thomson N.R."/>
            <person name="Pickard D."/>
            <person name="Wain J."/>
            <person name="Churcher C.M."/>
            <person name="Mungall K.L."/>
            <person name="Bentley S.D."/>
            <person name="Holden M.T.G."/>
            <person name="Sebaihia M."/>
            <person name="Baker S."/>
            <person name="Basham D."/>
            <person name="Brooks K."/>
            <person name="Chillingworth T."/>
            <person name="Connerton P."/>
            <person name="Cronin A."/>
            <person name="Davis P."/>
            <person name="Davies R.M."/>
            <person name="Dowd L."/>
            <person name="White N."/>
            <person name="Farrar J."/>
            <person name="Feltwell T."/>
            <person name="Hamlin N."/>
            <person name="Haque A."/>
            <person name="Hien T.T."/>
            <person name="Holroyd S."/>
            <person name="Jagels K."/>
            <person name="Krogh A."/>
            <person name="Larsen T.S."/>
            <person name="Leather S."/>
            <person name="Moule S."/>
            <person name="O'Gaora P."/>
            <person name="Parry C."/>
            <person name="Quail M.A."/>
            <person name="Rutherford K.M."/>
            <person name="Simmonds M."/>
            <person name="Skelton J."/>
            <person name="Stevens K."/>
            <person name="Whitehead S."/>
            <person name="Barrell B.G."/>
        </authorList>
    </citation>
    <scope>NUCLEOTIDE SEQUENCE [LARGE SCALE GENOMIC DNA]</scope>
    <source>
        <strain>CT18</strain>
    </source>
</reference>
<reference key="2">
    <citation type="journal article" date="2003" name="J. Bacteriol.">
        <title>Comparative genomics of Salmonella enterica serovar Typhi strains Ty2 and CT18.</title>
        <authorList>
            <person name="Deng W."/>
            <person name="Liou S.-R."/>
            <person name="Plunkett G. III"/>
            <person name="Mayhew G.F."/>
            <person name="Rose D.J."/>
            <person name="Burland V."/>
            <person name="Kodoyianni V."/>
            <person name="Schwartz D.C."/>
            <person name="Blattner F.R."/>
        </authorList>
    </citation>
    <scope>NUCLEOTIDE SEQUENCE [LARGE SCALE GENOMIC DNA]</scope>
    <source>
        <strain>ATCC 700931 / Ty2</strain>
    </source>
</reference>
<protein>
    <recommendedName>
        <fullName evidence="1">NH(3)-dependent NAD(+) synthetase</fullName>
        <ecNumber evidence="1">6.3.1.5</ecNumber>
    </recommendedName>
</protein>
<gene>
    <name evidence="1" type="primary">nadE</name>
    <name type="ordered locus">STY1803</name>
    <name type="ordered locus">t1189</name>
</gene>
<keyword id="KW-0067">ATP-binding</keyword>
<keyword id="KW-0436">Ligase</keyword>
<keyword id="KW-0460">Magnesium</keyword>
<keyword id="KW-0479">Metal-binding</keyword>
<keyword id="KW-0520">NAD</keyword>
<keyword id="KW-0547">Nucleotide-binding</keyword>